<dbReference type="EC" id="6.3.4.5" evidence="1"/>
<dbReference type="EMBL" id="CU928161">
    <property type="protein sequence ID" value="CAR04783.1"/>
    <property type="molecule type" value="Genomic_DNA"/>
</dbReference>
<dbReference type="RefSeq" id="WP_000207671.1">
    <property type="nucleotide sequence ID" value="NC_011742.1"/>
</dbReference>
<dbReference type="SMR" id="B7MB92"/>
<dbReference type="KEGG" id="ecz:ECS88_3555"/>
<dbReference type="HOGENOM" id="CLU_032784_4_1_6"/>
<dbReference type="UniPathway" id="UPA00068">
    <property type="reaction ID" value="UER00113"/>
</dbReference>
<dbReference type="Proteomes" id="UP000000747">
    <property type="component" value="Chromosome"/>
</dbReference>
<dbReference type="GO" id="GO:0005737">
    <property type="term" value="C:cytoplasm"/>
    <property type="evidence" value="ECO:0007669"/>
    <property type="project" value="UniProtKB-SubCell"/>
</dbReference>
<dbReference type="GO" id="GO:0004055">
    <property type="term" value="F:argininosuccinate synthase activity"/>
    <property type="evidence" value="ECO:0007669"/>
    <property type="project" value="UniProtKB-UniRule"/>
</dbReference>
<dbReference type="GO" id="GO:0005524">
    <property type="term" value="F:ATP binding"/>
    <property type="evidence" value="ECO:0007669"/>
    <property type="project" value="UniProtKB-UniRule"/>
</dbReference>
<dbReference type="GO" id="GO:0042803">
    <property type="term" value="F:protein homodimerization activity"/>
    <property type="evidence" value="ECO:0007669"/>
    <property type="project" value="InterPro"/>
</dbReference>
<dbReference type="GO" id="GO:0000053">
    <property type="term" value="P:argininosuccinate metabolic process"/>
    <property type="evidence" value="ECO:0007669"/>
    <property type="project" value="TreeGrafter"/>
</dbReference>
<dbReference type="GO" id="GO:0006526">
    <property type="term" value="P:L-arginine biosynthetic process"/>
    <property type="evidence" value="ECO:0007669"/>
    <property type="project" value="UniProtKB-UniRule"/>
</dbReference>
<dbReference type="GO" id="GO:0000050">
    <property type="term" value="P:urea cycle"/>
    <property type="evidence" value="ECO:0007669"/>
    <property type="project" value="TreeGrafter"/>
</dbReference>
<dbReference type="CDD" id="cd01999">
    <property type="entry name" value="ASS"/>
    <property type="match status" value="1"/>
</dbReference>
<dbReference type="FunFam" id="1.10.287.400:FF:000001">
    <property type="entry name" value="Argininosuccinate synthase"/>
    <property type="match status" value="1"/>
</dbReference>
<dbReference type="Gene3D" id="1.10.287.400">
    <property type="match status" value="1"/>
</dbReference>
<dbReference type="Gene3D" id="3.90.1260.10">
    <property type="entry name" value="Argininosuccinate synthetase, chain A, domain 2"/>
    <property type="match status" value="1"/>
</dbReference>
<dbReference type="Gene3D" id="3.40.50.620">
    <property type="entry name" value="HUPs"/>
    <property type="match status" value="1"/>
</dbReference>
<dbReference type="HAMAP" id="MF_00581">
    <property type="entry name" value="Arg_succ_synth_type2"/>
    <property type="match status" value="1"/>
</dbReference>
<dbReference type="InterPro" id="IPR023437">
    <property type="entry name" value="Arg_succ_synth_type2_subfam"/>
</dbReference>
<dbReference type="InterPro" id="IPR048268">
    <property type="entry name" value="Arginosuc_syn_C"/>
</dbReference>
<dbReference type="InterPro" id="IPR048267">
    <property type="entry name" value="Arginosuc_syn_N"/>
</dbReference>
<dbReference type="InterPro" id="IPR001518">
    <property type="entry name" value="Arginosuc_synth"/>
</dbReference>
<dbReference type="InterPro" id="IPR018223">
    <property type="entry name" value="Arginosuc_synth_CS"/>
</dbReference>
<dbReference type="InterPro" id="IPR023434">
    <property type="entry name" value="Arginosuc_synth_type_1_subfam"/>
</dbReference>
<dbReference type="InterPro" id="IPR024074">
    <property type="entry name" value="AS_cat/multimer_dom_body"/>
</dbReference>
<dbReference type="InterPro" id="IPR024073">
    <property type="entry name" value="AS_multimer_C_tail"/>
</dbReference>
<dbReference type="InterPro" id="IPR014729">
    <property type="entry name" value="Rossmann-like_a/b/a_fold"/>
</dbReference>
<dbReference type="NCBIfam" id="TIGR00032">
    <property type="entry name" value="argG"/>
    <property type="match status" value="1"/>
</dbReference>
<dbReference type="NCBIfam" id="NF003779">
    <property type="entry name" value="PRK05370.1"/>
    <property type="match status" value="1"/>
</dbReference>
<dbReference type="PANTHER" id="PTHR11587">
    <property type="entry name" value="ARGININOSUCCINATE SYNTHASE"/>
    <property type="match status" value="1"/>
</dbReference>
<dbReference type="PANTHER" id="PTHR11587:SF2">
    <property type="entry name" value="ARGININOSUCCINATE SYNTHASE"/>
    <property type="match status" value="1"/>
</dbReference>
<dbReference type="Pfam" id="PF20979">
    <property type="entry name" value="Arginosuc_syn_C"/>
    <property type="match status" value="1"/>
</dbReference>
<dbReference type="Pfam" id="PF00764">
    <property type="entry name" value="Arginosuc_synth"/>
    <property type="match status" value="1"/>
</dbReference>
<dbReference type="SUPFAM" id="SSF52402">
    <property type="entry name" value="Adenine nucleotide alpha hydrolases-like"/>
    <property type="match status" value="1"/>
</dbReference>
<dbReference type="SUPFAM" id="SSF69864">
    <property type="entry name" value="Argininosuccinate synthetase, C-terminal domain"/>
    <property type="match status" value="1"/>
</dbReference>
<dbReference type="PROSITE" id="PS00564">
    <property type="entry name" value="ARGININOSUCCIN_SYN_1"/>
    <property type="match status" value="1"/>
</dbReference>
<dbReference type="PROSITE" id="PS00565">
    <property type="entry name" value="ARGININOSUCCIN_SYN_2"/>
    <property type="match status" value="1"/>
</dbReference>
<feature type="chain" id="PRO_1000129745" description="Argininosuccinate synthase">
    <location>
        <begin position="1"/>
        <end position="447"/>
    </location>
</feature>
<feature type="binding site" evidence="1">
    <location>
        <begin position="17"/>
        <end position="25"/>
    </location>
    <ligand>
        <name>ATP</name>
        <dbReference type="ChEBI" id="CHEBI:30616"/>
    </ligand>
</feature>
<feature type="binding site" evidence="1">
    <location>
        <position position="43"/>
    </location>
    <ligand>
        <name>ATP</name>
        <dbReference type="ChEBI" id="CHEBI:30616"/>
    </ligand>
</feature>
<feature type="binding site" evidence="1">
    <location>
        <position position="99"/>
    </location>
    <ligand>
        <name>L-citrulline</name>
        <dbReference type="ChEBI" id="CHEBI:57743"/>
    </ligand>
</feature>
<feature type="binding site" evidence="1">
    <location>
        <position position="129"/>
    </location>
    <ligand>
        <name>ATP</name>
        <dbReference type="ChEBI" id="CHEBI:30616"/>
    </ligand>
</feature>
<feature type="binding site" evidence="1">
    <location>
        <position position="131"/>
    </location>
    <ligand>
        <name>ATP</name>
        <dbReference type="ChEBI" id="CHEBI:30616"/>
    </ligand>
</feature>
<feature type="binding site" evidence="1">
    <location>
        <position position="131"/>
    </location>
    <ligand>
        <name>L-aspartate</name>
        <dbReference type="ChEBI" id="CHEBI:29991"/>
    </ligand>
</feature>
<feature type="binding site" evidence="1">
    <location>
        <position position="135"/>
    </location>
    <ligand>
        <name>L-aspartate</name>
        <dbReference type="ChEBI" id="CHEBI:29991"/>
    </ligand>
</feature>
<feature type="binding site" evidence="1">
    <location>
        <position position="135"/>
    </location>
    <ligand>
        <name>L-citrulline</name>
        <dbReference type="ChEBI" id="CHEBI:57743"/>
    </ligand>
</feature>
<feature type="binding site" evidence="1">
    <location>
        <position position="136"/>
    </location>
    <ligand>
        <name>ATP</name>
        <dbReference type="ChEBI" id="CHEBI:30616"/>
    </ligand>
</feature>
<feature type="binding site" evidence="1">
    <location>
        <position position="136"/>
    </location>
    <ligand>
        <name>L-aspartate</name>
        <dbReference type="ChEBI" id="CHEBI:29991"/>
    </ligand>
</feature>
<feature type="binding site" evidence="1">
    <location>
        <position position="139"/>
    </location>
    <ligand>
        <name>L-citrulline</name>
        <dbReference type="ChEBI" id="CHEBI:57743"/>
    </ligand>
</feature>
<feature type="binding site" evidence="1">
    <location>
        <position position="192"/>
    </location>
    <ligand>
        <name>L-citrulline</name>
        <dbReference type="ChEBI" id="CHEBI:57743"/>
    </ligand>
</feature>
<feature type="binding site" evidence="1">
    <location>
        <position position="194"/>
    </location>
    <ligand>
        <name>ATP</name>
        <dbReference type="ChEBI" id="CHEBI:30616"/>
    </ligand>
</feature>
<feature type="binding site" evidence="1">
    <location>
        <position position="201"/>
    </location>
    <ligand>
        <name>L-citrulline</name>
        <dbReference type="ChEBI" id="CHEBI:57743"/>
    </ligand>
</feature>
<feature type="binding site" evidence="1">
    <location>
        <position position="203"/>
    </location>
    <ligand>
        <name>L-citrulline</name>
        <dbReference type="ChEBI" id="CHEBI:57743"/>
    </ligand>
</feature>
<feature type="binding site" evidence="1">
    <location>
        <position position="280"/>
    </location>
    <ligand>
        <name>L-citrulline</name>
        <dbReference type="ChEBI" id="CHEBI:57743"/>
    </ligand>
</feature>
<reference key="1">
    <citation type="journal article" date="2009" name="PLoS Genet.">
        <title>Organised genome dynamics in the Escherichia coli species results in highly diverse adaptive paths.</title>
        <authorList>
            <person name="Touchon M."/>
            <person name="Hoede C."/>
            <person name="Tenaillon O."/>
            <person name="Barbe V."/>
            <person name="Baeriswyl S."/>
            <person name="Bidet P."/>
            <person name="Bingen E."/>
            <person name="Bonacorsi S."/>
            <person name="Bouchier C."/>
            <person name="Bouvet O."/>
            <person name="Calteau A."/>
            <person name="Chiapello H."/>
            <person name="Clermont O."/>
            <person name="Cruveiller S."/>
            <person name="Danchin A."/>
            <person name="Diard M."/>
            <person name="Dossat C."/>
            <person name="Karoui M.E."/>
            <person name="Frapy E."/>
            <person name="Garry L."/>
            <person name="Ghigo J.M."/>
            <person name="Gilles A.M."/>
            <person name="Johnson J."/>
            <person name="Le Bouguenec C."/>
            <person name="Lescat M."/>
            <person name="Mangenot S."/>
            <person name="Martinez-Jehanne V."/>
            <person name="Matic I."/>
            <person name="Nassif X."/>
            <person name="Oztas S."/>
            <person name="Petit M.A."/>
            <person name="Pichon C."/>
            <person name="Rouy Z."/>
            <person name="Ruf C.S."/>
            <person name="Schneider D."/>
            <person name="Tourret J."/>
            <person name="Vacherie B."/>
            <person name="Vallenet D."/>
            <person name="Medigue C."/>
            <person name="Rocha E.P.C."/>
            <person name="Denamur E."/>
        </authorList>
    </citation>
    <scope>NUCLEOTIDE SEQUENCE [LARGE SCALE GENOMIC DNA]</scope>
    <source>
        <strain>S88 / ExPEC</strain>
    </source>
</reference>
<organism>
    <name type="scientific">Escherichia coli O45:K1 (strain S88 / ExPEC)</name>
    <dbReference type="NCBI Taxonomy" id="585035"/>
    <lineage>
        <taxon>Bacteria</taxon>
        <taxon>Pseudomonadati</taxon>
        <taxon>Pseudomonadota</taxon>
        <taxon>Gammaproteobacteria</taxon>
        <taxon>Enterobacterales</taxon>
        <taxon>Enterobacteriaceae</taxon>
        <taxon>Escherichia</taxon>
    </lineage>
</organism>
<protein>
    <recommendedName>
        <fullName evidence="1">Argininosuccinate synthase</fullName>
        <ecNumber evidence="1">6.3.4.5</ecNumber>
    </recommendedName>
    <alternativeName>
        <fullName evidence="1">Citrulline--aspartate ligase</fullName>
    </alternativeName>
</protein>
<sequence length="447" mass="49910">MTTILKHLPVGQRIGIAFSGGLDTSAALLWMRQKGAVPYAYTANLGQPDEEDYDAIPRRAMEYGAENARLIDCRKQLVAEGIAAIQCGAFHNTTGGLTYFNTTPLGRAVTGTMLVAAMKEDGVNIWGDGSTYKGNDIERFYRYGLLTNAELQIYKPWLDTDFIDELGGRHEMSEFMIACGFDYKMSVEKAYSTDSNMLGATHEAKDLEYLNSSVKIVNPIMGVKFWDESVKIPAEEVTVRFEQGHPVALNGKTFSDDVEMLLEANRIGGRHGLGMSDQIENRIIEAKSRGIYEAPGMALLHIAYERLLTGIHNEDTIEQYHAHGRQLGRLLYQGRWFDSQALMLRDSLQRWVASQITGEVTLELRRGNDYSILNTVSENLTYKPERLTMEKGDSVFSPDDRIGQLTMRNLDITDTREKLFGYAKTGLLSSSATSGVPQVENLENKGQ</sequence>
<comment type="catalytic activity">
    <reaction evidence="1">
        <text>L-citrulline + L-aspartate + ATP = 2-(N(omega)-L-arginino)succinate + AMP + diphosphate + H(+)</text>
        <dbReference type="Rhea" id="RHEA:10932"/>
        <dbReference type="ChEBI" id="CHEBI:15378"/>
        <dbReference type="ChEBI" id="CHEBI:29991"/>
        <dbReference type="ChEBI" id="CHEBI:30616"/>
        <dbReference type="ChEBI" id="CHEBI:33019"/>
        <dbReference type="ChEBI" id="CHEBI:57472"/>
        <dbReference type="ChEBI" id="CHEBI:57743"/>
        <dbReference type="ChEBI" id="CHEBI:456215"/>
        <dbReference type="EC" id="6.3.4.5"/>
    </reaction>
</comment>
<comment type="pathway">
    <text evidence="1">Amino-acid biosynthesis; L-arginine biosynthesis; L-arginine from L-ornithine and carbamoyl phosphate: step 2/3.</text>
</comment>
<comment type="subunit">
    <text evidence="1">Homotetramer.</text>
</comment>
<comment type="subcellular location">
    <subcellularLocation>
        <location evidence="1">Cytoplasm</location>
    </subcellularLocation>
</comment>
<comment type="similarity">
    <text evidence="1">Belongs to the argininosuccinate synthase family. Type 2 subfamily.</text>
</comment>
<proteinExistence type="inferred from homology"/>
<evidence type="ECO:0000255" key="1">
    <source>
        <dbReference type="HAMAP-Rule" id="MF_00581"/>
    </source>
</evidence>
<name>ASSY_ECO45</name>
<gene>
    <name evidence="1" type="primary">argG</name>
    <name type="ordered locus">ECS88_3555</name>
</gene>
<keyword id="KW-0028">Amino-acid biosynthesis</keyword>
<keyword id="KW-0055">Arginine biosynthesis</keyword>
<keyword id="KW-0067">ATP-binding</keyword>
<keyword id="KW-0963">Cytoplasm</keyword>
<keyword id="KW-0436">Ligase</keyword>
<keyword id="KW-0547">Nucleotide-binding</keyword>
<keyword id="KW-1185">Reference proteome</keyword>
<accession>B7MB92</accession>